<sequence length="191" mass="21432">MYGPKDHGWIEVVAGPMYSGKTEELIRRIRRAEIAKQKVQVFKPEIDNRYSKQDVVSHAGDKIQSVPVKSSKEILEKLLDDTDVIGIDEAQFFDDSLVEIVSKIANNNRRVICAGLDMDFKGEPFGPMPKLMAIAEFVDKIQAVCMVCNNPATRTQRLINGKPAKKSDPVVLIGAQESYEARCRKCHCVPR</sequence>
<reference key="1">
    <citation type="submission" date="2008-05" db="EMBL/GenBank/DDBJ databases">
        <title>Genome sequence of Clostridium botulinum Ba4 strain 657.</title>
        <authorList>
            <person name="Shrivastava S."/>
            <person name="Brown J.L."/>
            <person name="Bruce D."/>
            <person name="Detter C."/>
            <person name="Munk C."/>
            <person name="Smith L.A."/>
            <person name="Smith T.J."/>
            <person name="Sutton G."/>
            <person name="Brettin T.S."/>
        </authorList>
    </citation>
    <scope>NUCLEOTIDE SEQUENCE [LARGE SCALE GENOMIC DNA]</scope>
    <source>
        <strain>657 / Type Ba4</strain>
    </source>
</reference>
<feature type="chain" id="PRO_1000203109" description="Thymidine kinase">
    <location>
        <begin position="1"/>
        <end position="191"/>
    </location>
</feature>
<feature type="active site" description="Proton acceptor" evidence="1">
    <location>
        <position position="89"/>
    </location>
</feature>
<feature type="binding site" evidence="1">
    <location>
        <begin position="15"/>
        <end position="22"/>
    </location>
    <ligand>
        <name>ATP</name>
        <dbReference type="ChEBI" id="CHEBI:30616"/>
    </ligand>
</feature>
<feature type="binding site" evidence="1">
    <location>
        <begin position="88"/>
        <end position="91"/>
    </location>
    <ligand>
        <name>ATP</name>
        <dbReference type="ChEBI" id="CHEBI:30616"/>
    </ligand>
</feature>
<feature type="binding site" evidence="1">
    <location>
        <position position="145"/>
    </location>
    <ligand>
        <name>Zn(2+)</name>
        <dbReference type="ChEBI" id="CHEBI:29105"/>
    </ligand>
</feature>
<feature type="binding site" evidence="1">
    <location>
        <position position="148"/>
    </location>
    <ligand>
        <name>Zn(2+)</name>
        <dbReference type="ChEBI" id="CHEBI:29105"/>
    </ligand>
</feature>
<feature type="binding site" evidence="1">
    <location>
        <position position="183"/>
    </location>
    <ligand>
        <name>Zn(2+)</name>
        <dbReference type="ChEBI" id="CHEBI:29105"/>
    </ligand>
</feature>
<feature type="binding site" evidence="1">
    <location>
        <position position="186"/>
    </location>
    <ligand>
        <name>Zn(2+)</name>
        <dbReference type="ChEBI" id="CHEBI:29105"/>
    </ligand>
</feature>
<comment type="catalytic activity">
    <reaction evidence="1">
        <text>thymidine + ATP = dTMP + ADP + H(+)</text>
        <dbReference type="Rhea" id="RHEA:19129"/>
        <dbReference type="ChEBI" id="CHEBI:15378"/>
        <dbReference type="ChEBI" id="CHEBI:17748"/>
        <dbReference type="ChEBI" id="CHEBI:30616"/>
        <dbReference type="ChEBI" id="CHEBI:63528"/>
        <dbReference type="ChEBI" id="CHEBI:456216"/>
        <dbReference type="EC" id="2.7.1.21"/>
    </reaction>
</comment>
<comment type="subunit">
    <text evidence="1">Homotetramer.</text>
</comment>
<comment type="subcellular location">
    <subcellularLocation>
        <location evidence="1">Cytoplasm</location>
    </subcellularLocation>
</comment>
<comment type="similarity">
    <text evidence="1">Belongs to the thymidine kinase family.</text>
</comment>
<organism>
    <name type="scientific">Clostridium botulinum (strain 657 / Type Ba4)</name>
    <dbReference type="NCBI Taxonomy" id="515621"/>
    <lineage>
        <taxon>Bacteria</taxon>
        <taxon>Bacillati</taxon>
        <taxon>Bacillota</taxon>
        <taxon>Clostridia</taxon>
        <taxon>Eubacteriales</taxon>
        <taxon>Clostridiaceae</taxon>
        <taxon>Clostridium</taxon>
    </lineage>
</organism>
<keyword id="KW-0067">ATP-binding</keyword>
<keyword id="KW-0963">Cytoplasm</keyword>
<keyword id="KW-0237">DNA synthesis</keyword>
<keyword id="KW-0418">Kinase</keyword>
<keyword id="KW-0479">Metal-binding</keyword>
<keyword id="KW-0547">Nucleotide-binding</keyword>
<keyword id="KW-0808">Transferase</keyword>
<keyword id="KW-0862">Zinc</keyword>
<accession>C3KYH2</accession>
<evidence type="ECO:0000255" key="1">
    <source>
        <dbReference type="HAMAP-Rule" id="MF_00124"/>
    </source>
</evidence>
<gene>
    <name evidence="1" type="primary">tdk</name>
    <name type="ordered locus">CLJ_B0174</name>
</gene>
<proteinExistence type="inferred from homology"/>
<dbReference type="EC" id="2.7.1.21" evidence="1"/>
<dbReference type="EMBL" id="CP001083">
    <property type="protein sequence ID" value="ACQ54871.1"/>
    <property type="molecule type" value="Genomic_DNA"/>
</dbReference>
<dbReference type="RefSeq" id="WP_003356155.1">
    <property type="nucleotide sequence ID" value="NC_012658.1"/>
</dbReference>
<dbReference type="SMR" id="C3KYH2"/>
<dbReference type="KEGG" id="cbi:CLJ_B0174"/>
<dbReference type="HOGENOM" id="CLU_064400_3_0_9"/>
<dbReference type="Proteomes" id="UP000002333">
    <property type="component" value="Chromosome"/>
</dbReference>
<dbReference type="GO" id="GO:0005829">
    <property type="term" value="C:cytosol"/>
    <property type="evidence" value="ECO:0007669"/>
    <property type="project" value="TreeGrafter"/>
</dbReference>
<dbReference type="GO" id="GO:0005524">
    <property type="term" value="F:ATP binding"/>
    <property type="evidence" value="ECO:0007669"/>
    <property type="project" value="UniProtKB-UniRule"/>
</dbReference>
<dbReference type="GO" id="GO:0004797">
    <property type="term" value="F:thymidine kinase activity"/>
    <property type="evidence" value="ECO:0007669"/>
    <property type="project" value="UniProtKB-UniRule"/>
</dbReference>
<dbReference type="GO" id="GO:0008270">
    <property type="term" value="F:zinc ion binding"/>
    <property type="evidence" value="ECO:0007669"/>
    <property type="project" value="UniProtKB-UniRule"/>
</dbReference>
<dbReference type="GO" id="GO:0071897">
    <property type="term" value="P:DNA biosynthetic process"/>
    <property type="evidence" value="ECO:0007669"/>
    <property type="project" value="UniProtKB-KW"/>
</dbReference>
<dbReference type="GO" id="GO:0046104">
    <property type="term" value="P:thymidine metabolic process"/>
    <property type="evidence" value="ECO:0007669"/>
    <property type="project" value="TreeGrafter"/>
</dbReference>
<dbReference type="FunFam" id="3.30.60.20:FF:000026">
    <property type="entry name" value="Thymidine kinase"/>
    <property type="match status" value="1"/>
</dbReference>
<dbReference type="FunFam" id="3.40.50.300:FF:000384">
    <property type="entry name" value="Thymidine kinase"/>
    <property type="match status" value="1"/>
</dbReference>
<dbReference type="Gene3D" id="3.30.60.20">
    <property type="match status" value="1"/>
</dbReference>
<dbReference type="Gene3D" id="3.40.50.300">
    <property type="entry name" value="P-loop containing nucleotide triphosphate hydrolases"/>
    <property type="match status" value="1"/>
</dbReference>
<dbReference type="HAMAP" id="MF_00124">
    <property type="entry name" value="Thymidine_kinase"/>
    <property type="match status" value="1"/>
</dbReference>
<dbReference type="InterPro" id="IPR027417">
    <property type="entry name" value="P-loop_NTPase"/>
</dbReference>
<dbReference type="InterPro" id="IPR001267">
    <property type="entry name" value="Thymidine_kinase"/>
</dbReference>
<dbReference type="InterPro" id="IPR020633">
    <property type="entry name" value="Thymidine_kinase_CS"/>
</dbReference>
<dbReference type="NCBIfam" id="NF003296">
    <property type="entry name" value="PRK04296.1-1"/>
    <property type="match status" value="1"/>
</dbReference>
<dbReference type="PANTHER" id="PTHR11441">
    <property type="entry name" value="THYMIDINE KINASE"/>
    <property type="match status" value="1"/>
</dbReference>
<dbReference type="PANTHER" id="PTHR11441:SF0">
    <property type="entry name" value="THYMIDINE KINASE, CYTOSOLIC"/>
    <property type="match status" value="1"/>
</dbReference>
<dbReference type="Pfam" id="PF00265">
    <property type="entry name" value="TK"/>
    <property type="match status" value="1"/>
</dbReference>
<dbReference type="PIRSF" id="PIRSF035805">
    <property type="entry name" value="TK_cell"/>
    <property type="match status" value="1"/>
</dbReference>
<dbReference type="SUPFAM" id="SSF57716">
    <property type="entry name" value="Glucocorticoid receptor-like (DNA-binding domain)"/>
    <property type="match status" value="1"/>
</dbReference>
<dbReference type="SUPFAM" id="SSF52540">
    <property type="entry name" value="P-loop containing nucleoside triphosphate hydrolases"/>
    <property type="match status" value="1"/>
</dbReference>
<dbReference type="PROSITE" id="PS00603">
    <property type="entry name" value="TK_CELLULAR_TYPE"/>
    <property type="match status" value="1"/>
</dbReference>
<name>KITH_CLOB6</name>
<protein>
    <recommendedName>
        <fullName evidence="1">Thymidine kinase</fullName>
        <ecNumber evidence="1">2.7.1.21</ecNumber>
    </recommendedName>
</protein>